<comment type="function">
    <text evidence="1">Converts heme B (protoheme IX) to heme O by substitution of the vinyl group on carbon 2 of heme B porphyrin ring with a hydroxyethyl farnesyl side group.</text>
</comment>
<comment type="catalytic activity">
    <reaction evidence="1">
        <text>heme b + (2E,6E)-farnesyl diphosphate + H2O = Fe(II)-heme o + diphosphate</text>
        <dbReference type="Rhea" id="RHEA:28070"/>
        <dbReference type="ChEBI" id="CHEBI:15377"/>
        <dbReference type="ChEBI" id="CHEBI:33019"/>
        <dbReference type="ChEBI" id="CHEBI:60344"/>
        <dbReference type="ChEBI" id="CHEBI:60530"/>
        <dbReference type="ChEBI" id="CHEBI:175763"/>
        <dbReference type="EC" id="2.5.1.141"/>
    </reaction>
</comment>
<comment type="pathway">
    <text evidence="1">Porphyrin-containing compound metabolism; heme O biosynthesis; heme O from protoheme: step 1/1.</text>
</comment>
<comment type="subcellular location">
    <subcellularLocation>
        <location evidence="1">Cell inner membrane</location>
        <topology evidence="1">Multi-pass membrane protein</topology>
    </subcellularLocation>
</comment>
<comment type="miscellaneous">
    <text evidence="1">Carbon 2 of the heme B porphyrin ring is defined according to the Fischer nomenclature.</text>
</comment>
<comment type="similarity">
    <text evidence="1">Belongs to the UbiA prenyltransferase family. Protoheme IX farnesyltransferase subfamily.</text>
</comment>
<feature type="chain" id="PRO_0000326910" description="Protoheme IX farnesyltransferase">
    <location>
        <begin position="1"/>
        <end position="298"/>
    </location>
</feature>
<feature type="transmembrane region" description="Helical" evidence="1">
    <location>
        <begin position="26"/>
        <end position="46"/>
    </location>
</feature>
<feature type="transmembrane region" description="Helical" evidence="1">
    <location>
        <begin position="52"/>
        <end position="72"/>
    </location>
</feature>
<feature type="transmembrane region" description="Helical" evidence="1">
    <location>
        <begin position="98"/>
        <end position="118"/>
    </location>
</feature>
<feature type="transmembrane region" description="Helical" evidence="1">
    <location>
        <begin position="120"/>
        <end position="140"/>
    </location>
</feature>
<feature type="transmembrane region" description="Helical" evidence="1">
    <location>
        <begin position="148"/>
        <end position="168"/>
    </location>
</feature>
<feature type="transmembrane region" description="Helical" evidence="1">
    <location>
        <begin position="174"/>
        <end position="194"/>
    </location>
</feature>
<feature type="transmembrane region" description="Helical" evidence="1">
    <location>
        <begin position="214"/>
        <end position="234"/>
    </location>
</feature>
<feature type="transmembrane region" description="Helical" evidence="1">
    <location>
        <begin position="241"/>
        <end position="261"/>
    </location>
</feature>
<feature type="transmembrane region" description="Helical" evidence="1">
    <location>
        <begin position="278"/>
        <end position="298"/>
    </location>
</feature>
<name>CYOE_METCA</name>
<accession>Q60CP3</accession>
<protein>
    <recommendedName>
        <fullName evidence="1">Protoheme IX farnesyltransferase</fullName>
        <ecNumber evidence="1">2.5.1.141</ecNumber>
    </recommendedName>
    <alternativeName>
        <fullName evidence="1">Heme B farnesyltransferase</fullName>
    </alternativeName>
    <alternativeName>
        <fullName evidence="1">Heme O synthase</fullName>
    </alternativeName>
</protein>
<sequence length="298" mass="32209">MTTNSSGKPAGGISWRTYLALCKLKVVGHIVFTAIIGMFLAVPGVPPLDTAFWASLGIGFAAASAAALNHFLDRHADAEMARTQNRPLPSGDIRPAQVVGFALVLGIVAMAILIAFVNMLTAFLTFLSLIGYAVIYTVYLKRATPQNIVIGGAAGAAPPVLGWCAVTGSVHPYALLLFLLIFVWTPPHFWAYAIAKRDDYAKVDIPMLPVTHGIAFTQLHILLYTILLFLAGLMPYVTGMSGEIYLAAALIFGGIFVYYAIRLKRKADPRLAMQTFAYSLVYLVGIFSALLVDHYIVL</sequence>
<dbReference type="EC" id="2.5.1.141" evidence="1"/>
<dbReference type="EMBL" id="AE017282">
    <property type="protein sequence ID" value="AAU90787.1"/>
    <property type="molecule type" value="Genomic_DNA"/>
</dbReference>
<dbReference type="RefSeq" id="WP_010959434.1">
    <property type="nucleotide sequence ID" value="NC_002977.6"/>
</dbReference>
<dbReference type="SMR" id="Q60CP3"/>
<dbReference type="STRING" id="243233.MCA0062"/>
<dbReference type="GeneID" id="88222412"/>
<dbReference type="KEGG" id="mca:MCA0062"/>
<dbReference type="eggNOG" id="COG0109">
    <property type="taxonomic scope" value="Bacteria"/>
</dbReference>
<dbReference type="HOGENOM" id="CLU_029631_0_2_6"/>
<dbReference type="UniPathway" id="UPA00834">
    <property type="reaction ID" value="UER00712"/>
</dbReference>
<dbReference type="Proteomes" id="UP000006821">
    <property type="component" value="Chromosome"/>
</dbReference>
<dbReference type="GO" id="GO:0005886">
    <property type="term" value="C:plasma membrane"/>
    <property type="evidence" value="ECO:0007669"/>
    <property type="project" value="UniProtKB-SubCell"/>
</dbReference>
<dbReference type="GO" id="GO:0008495">
    <property type="term" value="F:protoheme IX farnesyltransferase activity"/>
    <property type="evidence" value="ECO:0007669"/>
    <property type="project" value="UniProtKB-UniRule"/>
</dbReference>
<dbReference type="GO" id="GO:0048034">
    <property type="term" value="P:heme O biosynthetic process"/>
    <property type="evidence" value="ECO:0007669"/>
    <property type="project" value="UniProtKB-UniRule"/>
</dbReference>
<dbReference type="CDD" id="cd13957">
    <property type="entry name" value="PT_UbiA_Cox10"/>
    <property type="match status" value="1"/>
</dbReference>
<dbReference type="FunFam" id="1.10.357.140:FF:000001">
    <property type="entry name" value="Protoheme IX farnesyltransferase"/>
    <property type="match status" value="1"/>
</dbReference>
<dbReference type="Gene3D" id="1.10.357.140">
    <property type="entry name" value="UbiA prenyltransferase"/>
    <property type="match status" value="1"/>
</dbReference>
<dbReference type="HAMAP" id="MF_00154">
    <property type="entry name" value="CyoE_CtaB"/>
    <property type="match status" value="1"/>
</dbReference>
<dbReference type="InterPro" id="IPR006369">
    <property type="entry name" value="Protohaem_IX_farnesylTrfase"/>
</dbReference>
<dbReference type="InterPro" id="IPR000537">
    <property type="entry name" value="UbiA_prenyltransferase"/>
</dbReference>
<dbReference type="InterPro" id="IPR044878">
    <property type="entry name" value="UbiA_sf"/>
</dbReference>
<dbReference type="NCBIfam" id="TIGR01473">
    <property type="entry name" value="cyoE_ctaB"/>
    <property type="match status" value="1"/>
</dbReference>
<dbReference type="NCBIfam" id="NF003349">
    <property type="entry name" value="PRK04375.1-2"/>
    <property type="match status" value="1"/>
</dbReference>
<dbReference type="PANTHER" id="PTHR43448:SF7">
    <property type="entry name" value="4-HYDROXYBENZOATE SOLANESYLTRANSFERASE"/>
    <property type="match status" value="1"/>
</dbReference>
<dbReference type="PANTHER" id="PTHR43448">
    <property type="entry name" value="PROTOHEME IX FARNESYLTRANSFERASE, MITOCHONDRIAL"/>
    <property type="match status" value="1"/>
</dbReference>
<dbReference type="Pfam" id="PF01040">
    <property type="entry name" value="UbiA"/>
    <property type="match status" value="1"/>
</dbReference>
<keyword id="KW-0997">Cell inner membrane</keyword>
<keyword id="KW-1003">Cell membrane</keyword>
<keyword id="KW-0350">Heme biosynthesis</keyword>
<keyword id="KW-0472">Membrane</keyword>
<keyword id="KW-1185">Reference proteome</keyword>
<keyword id="KW-0808">Transferase</keyword>
<keyword id="KW-0812">Transmembrane</keyword>
<keyword id="KW-1133">Transmembrane helix</keyword>
<evidence type="ECO:0000255" key="1">
    <source>
        <dbReference type="HAMAP-Rule" id="MF_00154"/>
    </source>
</evidence>
<organism>
    <name type="scientific">Methylococcus capsulatus (strain ATCC 33009 / NCIMB 11132 / Bath)</name>
    <dbReference type="NCBI Taxonomy" id="243233"/>
    <lineage>
        <taxon>Bacteria</taxon>
        <taxon>Pseudomonadati</taxon>
        <taxon>Pseudomonadota</taxon>
        <taxon>Gammaproteobacteria</taxon>
        <taxon>Methylococcales</taxon>
        <taxon>Methylococcaceae</taxon>
        <taxon>Methylococcus</taxon>
    </lineage>
</organism>
<proteinExistence type="inferred from homology"/>
<gene>
    <name evidence="1" type="primary">cyoE</name>
    <name type="ordered locus">MCA0062</name>
</gene>
<reference key="1">
    <citation type="journal article" date="2004" name="PLoS Biol.">
        <title>Genomic insights into methanotrophy: the complete genome sequence of Methylococcus capsulatus (Bath).</title>
        <authorList>
            <person name="Ward N.L."/>
            <person name="Larsen O."/>
            <person name="Sakwa J."/>
            <person name="Bruseth L."/>
            <person name="Khouri H.M."/>
            <person name="Durkin A.S."/>
            <person name="Dimitrov G."/>
            <person name="Jiang L."/>
            <person name="Scanlan D."/>
            <person name="Kang K.H."/>
            <person name="Lewis M.R."/>
            <person name="Nelson K.E."/>
            <person name="Methe B.A."/>
            <person name="Wu M."/>
            <person name="Heidelberg J.F."/>
            <person name="Paulsen I.T."/>
            <person name="Fouts D.E."/>
            <person name="Ravel J."/>
            <person name="Tettelin H."/>
            <person name="Ren Q."/>
            <person name="Read T.D."/>
            <person name="DeBoy R.T."/>
            <person name="Seshadri R."/>
            <person name="Salzberg S.L."/>
            <person name="Jensen H.B."/>
            <person name="Birkeland N.K."/>
            <person name="Nelson W.C."/>
            <person name="Dodson R.J."/>
            <person name="Grindhaug S.H."/>
            <person name="Holt I.E."/>
            <person name="Eidhammer I."/>
            <person name="Jonasen I."/>
            <person name="Vanaken S."/>
            <person name="Utterback T.R."/>
            <person name="Feldblyum T.V."/>
            <person name="Fraser C.M."/>
            <person name="Lillehaug J.R."/>
            <person name="Eisen J.A."/>
        </authorList>
    </citation>
    <scope>NUCLEOTIDE SEQUENCE [LARGE SCALE GENOMIC DNA]</scope>
    <source>
        <strain>ATCC 33009 / NCIMB 11132 / Bath</strain>
    </source>
</reference>